<proteinExistence type="inferred from homology"/>
<evidence type="ECO:0000255" key="1"/>
<evidence type="ECO:0000256" key="2">
    <source>
        <dbReference type="SAM" id="MobiDB-lite"/>
    </source>
</evidence>
<evidence type="ECO:0000303" key="3">
    <source>
    </source>
</evidence>
<evidence type="ECO:0000305" key="4"/>
<evidence type="ECO:0000305" key="5">
    <source>
    </source>
</evidence>
<comment type="subcellular location">
    <subcellularLocation>
        <location evidence="5">Secreted</location>
    </subcellularLocation>
</comment>
<comment type="tissue specificity">
    <text evidence="5">Expressed by the venom gland.</text>
</comment>
<comment type="PTM">
    <text evidence="4">Contains 4 disulfide bonds.</text>
</comment>
<comment type="miscellaneous">
    <text evidence="4">The scoloptoxin-05 family has remarkable similarities with the three-finger toxin family commonly found in snakes.</text>
</comment>
<comment type="similarity">
    <text evidence="4">Belongs to the scoloptoxin-05 family.</text>
</comment>
<comment type="online information" name="National Center for Biotechnology Information (NCBI)">
    <link uri="https://www.ncbi.nlm.nih.gov/nuccore/GASK01000051"/>
</comment>
<organism>
    <name type="scientific">Scolopendra alternans</name>
    <name type="common">Florida Keys giant centipede</name>
    <dbReference type="NCBI Taxonomy" id="1329349"/>
    <lineage>
        <taxon>Eukaryota</taxon>
        <taxon>Metazoa</taxon>
        <taxon>Ecdysozoa</taxon>
        <taxon>Arthropoda</taxon>
        <taxon>Myriapoda</taxon>
        <taxon>Chilopoda</taxon>
        <taxon>Pleurostigmophora</taxon>
        <taxon>Scolopendromorpha</taxon>
        <taxon>Scolopendridae</taxon>
        <taxon>Scolopendra</taxon>
    </lineage>
</organism>
<accession>P0DPX6</accession>
<sequence>MKEAVKMSCLCIFLFLFLFSLTDAIKCIKCGESGLFGTEDCVTGNFEAEECGPNDQYCTKIILNDGTRTTAQRGCSVGHVPESNQKDGKVSTHMSSCNTDGCNAN</sequence>
<protein>
    <recommendedName>
        <fullName evidence="3">U-scoloptoxin(05)-Sa2a</fullName>
        <shortName evidence="3">U-SLPTX(05)-Sa2a</shortName>
    </recommendedName>
</protein>
<keyword id="KW-1015">Disulfide bond</keyword>
<keyword id="KW-0964">Secreted</keyword>
<keyword id="KW-0732">Signal</keyword>
<keyword id="KW-0800">Toxin</keyword>
<name>TX52A_SCOAL</name>
<dbReference type="SMR" id="P0DPX6"/>
<dbReference type="GO" id="GO:0005576">
    <property type="term" value="C:extracellular region"/>
    <property type="evidence" value="ECO:0007669"/>
    <property type="project" value="UniProtKB-SubCell"/>
</dbReference>
<dbReference type="GO" id="GO:0090729">
    <property type="term" value="F:toxin activity"/>
    <property type="evidence" value="ECO:0007669"/>
    <property type="project" value="UniProtKB-KW"/>
</dbReference>
<dbReference type="Gene3D" id="2.10.60.10">
    <property type="entry name" value="CD59"/>
    <property type="match status" value="1"/>
</dbReference>
<dbReference type="InterPro" id="IPR045860">
    <property type="entry name" value="Snake_toxin-like_sf"/>
</dbReference>
<dbReference type="InterPro" id="IPR035076">
    <property type="entry name" value="Toxin/TOLIP"/>
</dbReference>
<dbReference type="Pfam" id="PF00087">
    <property type="entry name" value="Toxin_TOLIP"/>
    <property type="match status" value="1"/>
</dbReference>
<dbReference type="SUPFAM" id="SSF57302">
    <property type="entry name" value="Snake toxin-like"/>
    <property type="match status" value="1"/>
</dbReference>
<reference key="1">
    <citation type="journal article" date="2014" name="Mol. Biol. Evol.">
        <title>Clawing through evolution: toxin diversification and convergence in the ancient lineage Chilopoda (centipedes).</title>
        <authorList>
            <person name="Undheim E.A."/>
            <person name="Jones A."/>
            <person name="Clauser K.R."/>
            <person name="Holland J.W."/>
            <person name="Pineda S.S."/>
            <person name="King G.F."/>
            <person name="Fry B.G."/>
        </authorList>
    </citation>
    <scope>NUCLEOTIDE SEQUENCE [MRNA]</scope>
    <scope>NOMENCLATURE</scope>
    <source>
        <tissue>Venom gland</tissue>
    </source>
</reference>
<feature type="signal peptide" evidence="1">
    <location>
        <begin position="1"/>
        <end position="24"/>
    </location>
</feature>
<feature type="chain" id="PRO_0000446724" description="U-scoloptoxin(05)-Sa2a" evidence="4">
    <location>
        <begin position="25"/>
        <end position="105"/>
    </location>
</feature>
<feature type="region of interest" description="Disordered" evidence="2">
    <location>
        <begin position="79"/>
        <end position="105"/>
    </location>
</feature>
<feature type="compositionally biased region" description="Polar residues" evidence="2">
    <location>
        <begin position="92"/>
        <end position="105"/>
    </location>
</feature>